<proteinExistence type="inferred from homology"/>
<keyword id="KW-0067">ATP-binding</keyword>
<keyword id="KW-0418">Kinase</keyword>
<keyword id="KW-0460">Magnesium</keyword>
<keyword id="KW-0479">Metal-binding</keyword>
<keyword id="KW-0547">Nucleotide-binding</keyword>
<keyword id="KW-0784">Thiamine biosynthesis</keyword>
<keyword id="KW-0808">Transferase</keyword>
<accession>Q0I129</accession>
<feature type="chain" id="PRO_0000336560" description="Hydroxyethylthiazole kinase">
    <location>
        <begin position="1"/>
        <end position="266"/>
    </location>
</feature>
<feature type="binding site" evidence="1">
    <location>
        <position position="41"/>
    </location>
    <ligand>
        <name>substrate</name>
    </ligand>
</feature>
<feature type="binding site" evidence="1">
    <location>
        <position position="117"/>
    </location>
    <ligand>
        <name>ATP</name>
        <dbReference type="ChEBI" id="CHEBI:30616"/>
    </ligand>
</feature>
<feature type="binding site" evidence="1">
    <location>
        <position position="163"/>
    </location>
    <ligand>
        <name>ATP</name>
        <dbReference type="ChEBI" id="CHEBI:30616"/>
    </ligand>
</feature>
<feature type="binding site" evidence="1">
    <location>
        <position position="190"/>
    </location>
    <ligand>
        <name>substrate</name>
    </ligand>
</feature>
<gene>
    <name evidence="1" type="primary">thiM</name>
    <name type="ordered locus">HS_0092</name>
</gene>
<sequence length="266" mass="28152">MNSQFLTKLRQRNPLIHNITNIVAANFSANGLLAIGASPIMSACIEEMEEMAKLSQSLVINIGTLTGKDVEAMLLAGKTANQVGIPVVLDPVGVGATTFRQKTTALLLEQVQFSAIRGNAGELAYIAGVQWSTKGVDAGKGMADIAEIAHLVARKYQCIAVISGETDYISDGKRLAKLNNGTPLFPKITASGCLLSAVCSAFLAVAEQKDYFDALVEGCSAYAIAGEIAAQSLSSTQFGQFTLGLLDQLASLTPEQINQYARISYE</sequence>
<evidence type="ECO:0000255" key="1">
    <source>
        <dbReference type="HAMAP-Rule" id="MF_00228"/>
    </source>
</evidence>
<organism>
    <name type="scientific">Histophilus somni (strain 129Pt)</name>
    <name type="common">Haemophilus somnus</name>
    <dbReference type="NCBI Taxonomy" id="205914"/>
    <lineage>
        <taxon>Bacteria</taxon>
        <taxon>Pseudomonadati</taxon>
        <taxon>Pseudomonadota</taxon>
        <taxon>Gammaproteobacteria</taxon>
        <taxon>Pasteurellales</taxon>
        <taxon>Pasteurellaceae</taxon>
        <taxon>Histophilus</taxon>
    </lineage>
</organism>
<protein>
    <recommendedName>
        <fullName evidence="1">Hydroxyethylthiazole kinase</fullName>
        <ecNumber evidence="1">2.7.1.50</ecNumber>
    </recommendedName>
    <alternativeName>
        <fullName evidence="1">4-methyl-5-beta-hydroxyethylthiazole kinase</fullName>
        <shortName evidence="1">TH kinase</shortName>
        <shortName evidence="1">Thz kinase</shortName>
    </alternativeName>
</protein>
<dbReference type="EC" id="2.7.1.50" evidence="1"/>
<dbReference type="EMBL" id="CP000436">
    <property type="protein sequence ID" value="ABI24373.1"/>
    <property type="molecule type" value="Genomic_DNA"/>
</dbReference>
<dbReference type="SMR" id="Q0I129"/>
<dbReference type="KEGG" id="hso:HS_0092"/>
<dbReference type="eggNOG" id="COG2145">
    <property type="taxonomic scope" value="Bacteria"/>
</dbReference>
<dbReference type="HOGENOM" id="CLU_019943_0_0_6"/>
<dbReference type="UniPathway" id="UPA00060">
    <property type="reaction ID" value="UER00139"/>
</dbReference>
<dbReference type="GO" id="GO:0005524">
    <property type="term" value="F:ATP binding"/>
    <property type="evidence" value="ECO:0007669"/>
    <property type="project" value="UniProtKB-UniRule"/>
</dbReference>
<dbReference type="GO" id="GO:0004417">
    <property type="term" value="F:hydroxyethylthiazole kinase activity"/>
    <property type="evidence" value="ECO:0007669"/>
    <property type="project" value="UniProtKB-UniRule"/>
</dbReference>
<dbReference type="GO" id="GO:0000287">
    <property type="term" value="F:magnesium ion binding"/>
    <property type="evidence" value="ECO:0007669"/>
    <property type="project" value="UniProtKB-UniRule"/>
</dbReference>
<dbReference type="GO" id="GO:0009228">
    <property type="term" value="P:thiamine biosynthetic process"/>
    <property type="evidence" value="ECO:0007669"/>
    <property type="project" value="UniProtKB-KW"/>
</dbReference>
<dbReference type="GO" id="GO:0009229">
    <property type="term" value="P:thiamine diphosphate biosynthetic process"/>
    <property type="evidence" value="ECO:0007669"/>
    <property type="project" value="UniProtKB-UniRule"/>
</dbReference>
<dbReference type="CDD" id="cd01170">
    <property type="entry name" value="THZ_kinase"/>
    <property type="match status" value="1"/>
</dbReference>
<dbReference type="Gene3D" id="3.40.1190.20">
    <property type="match status" value="1"/>
</dbReference>
<dbReference type="HAMAP" id="MF_00228">
    <property type="entry name" value="Thz_kinase"/>
    <property type="match status" value="1"/>
</dbReference>
<dbReference type="InterPro" id="IPR000417">
    <property type="entry name" value="Hyethyz_kinase"/>
</dbReference>
<dbReference type="InterPro" id="IPR029056">
    <property type="entry name" value="Ribokinase-like"/>
</dbReference>
<dbReference type="NCBIfam" id="NF006830">
    <property type="entry name" value="PRK09355.1"/>
    <property type="match status" value="1"/>
</dbReference>
<dbReference type="NCBIfam" id="TIGR00694">
    <property type="entry name" value="thiM"/>
    <property type="match status" value="1"/>
</dbReference>
<dbReference type="Pfam" id="PF02110">
    <property type="entry name" value="HK"/>
    <property type="match status" value="1"/>
</dbReference>
<dbReference type="PIRSF" id="PIRSF000513">
    <property type="entry name" value="Thz_kinase"/>
    <property type="match status" value="1"/>
</dbReference>
<dbReference type="PRINTS" id="PR01099">
    <property type="entry name" value="HYETHTZKNASE"/>
</dbReference>
<dbReference type="SUPFAM" id="SSF53613">
    <property type="entry name" value="Ribokinase-like"/>
    <property type="match status" value="1"/>
</dbReference>
<comment type="function">
    <text evidence="1">Catalyzes the phosphorylation of the hydroxyl group of 4-methyl-5-beta-hydroxyethylthiazole (THZ).</text>
</comment>
<comment type="catalytic activity">
    <reaction evidence="1">
        <text>5-(2-hydroxyethyl)-4-methylthiazole + ATP = 4-methyl-5-(2-phosphooxyethyl)-thiazole + ADP + H(+)</text>
        <dbReference type="Rhea" id="RHEA:24212"/>
        <dbReference type="ChEBI" id="CHEBI:15378"/>
        <dbReference type="ChEBI" id="CHEBI:17957"/>
        <dbReference type="ChEBI" id="CHEBI:30616"/>
        <dbReference type="ChEBI" id="CHEBI:58296"/>
        <dbReference type="ChEBI" id="CHEBI:456216"/>
        <dbReference type="EC" id="2.7.1.50"/>
    </reaction>
</comment>
<comment type="cofactor">
    <cofactor evidence="1">
        <name>Mg(2+)</name>
        <dbReference type="ChEBI" id="CHEBI:18420"/>
    </cofactor>
</comment>
<comment type="pathway">
    <text evidence="1">Cofactor biosynthesis; thiamine diphosphate biosynthesis; 4-methyl-5-(2-phosphoethyl)-thiazole from 5-(2-hydroxyethyl)-4-methylthiazole: step 1/1.</text>
</comment>
<comment type="similarity">
    <text evidence="1">Belongs to the Thz kinase family.</text>
</comment>
<name>THIM_HISS1</name>
<reference key="1">
    <citation type="journal article" date="2007" name="J. Bacteriol.">
        <title>Complete genome sequence of Haemophilus somnus (Histophilus somni) strain 129Pt and comparison to Haemophilus ducreyi 35000HP and Haemophilus influenzae Rd.</title>
        <authorList>
            <person name="Challacombe J.F."/>
            <person name="Duncan A.J."/>
            <person name="Brettin T.S."/>
            <person name="Bruce D."/>
            <person name="Chertkov O."/>
            <person name="Detter J.C."/>
            <person name="Han C.S."/>
            <person name="Misra M."/>
            <person name="Richardson P."/>
            <person name="Tapia R."/>
            <person name="Thayer N."/>
            <person name="Xie G."/>
            <person name="Inzana T.J."/>
        </authorList>
    </citation>
    <scope>NUCLEOTIDE SEQUENCE [LARGE SCALE GENOMIC DNA]</scope>
    <source>
        <strain>129Pt</strain>
    </source>
</reference>